<keyword id="KW-0143">Chaperone</keyword>
<keyword id="KW-0963">Cytoplasm</keyword>
<keyword id="KW-0235">DNA replication</keyword>
<keyword id="KW-0479">Metal-binding</keyword>
<keyword id="KW-0677">Repeat</keyword>
<keyword id="KW-0346">Stress response</keyword>
<keyword id="KW-0862">Zinc</keyword>
<keyword id="KW-0863">Zinc-finger</keyword>
<organism>
    <name type="scientific">Methanosarcina mazei</name>
    <name type="common">Methanosarcina frisia</name>
    <dbReference type="NCBI Taxonomy" id="2209"/>
    <lineage>
        <taxon>Archaea</taxon>
        <taxon>Methanobacteriati</taxon>
        <taxon>Methanobacteriota</taxon>
        <taxon>Stenosarchaea group</taxon>
        <taxon>Methanomicrobia</taxon>
        <taxon>Methanosarcinales</taxon>
        <taxon>Methanosarcinaceae</taxon>
        <taxon>Methanosarcina</taxon>
    </lineage>
</organism>
<proteinExistence type="inferred from homology"/>
<name>DNAJ_METMZ</name>
<accession>P0CW06</accession>
<accession>P35515</accession>
<dbReference type="EMBL" id="X60265">
    <property type="protein sequence ID" value="CAA42813.1"/>
    <property type="molecule type" value="Genomic_DNA"/>
</dbReference>
<dbReference type="PIR" id="S41748">
    <property type="entry name" value="S41748"/>
</dbReference>
<dbReference type="RefSeq" id="WP_011034422.1">
    <property type="nucleotide sequence ID" value="NZ_JJRB01000013.1"/>
</dbReference>
<dbReference type="SMR" id="P0CW06"/>
<dbReference type="GeneID" id="82161581"/>
<dbReference type="OMA" id="MATDYYA"/>
<dbReference type="OrthoDB" id="8967at2157"/>
<dbReference type="GO" id="GO:0005737">
    <property type="term" value="C:cytoplasm"/>
    <property type="evidence" value="ECO:0007669"/>
    <property type="project" value="UniProtKB-SubCell"/>
</dbReference>
<dbReference type="GO" id="GO:0005524">
    <property type="term" value="F:ATP binding"/>
    <property type="evidence" value="ECO:0007669"/>
    <property type="project" value="InterPro"/>
</dbReference>
<dbReference type="GO" id="GO:0031072">
    <property type="term" value="F:heat shock protein binding"/>
    <property type="evidence" value="ECO:0007669"/>
    <property type="project" value="InterPro"/>
</dbReference>
<dbReference type="GO" id="GO:0051082">
    <property type="term" value="F:unfolded protein binding"/>
    <property type="evidence" value="ECO:0007669"/>
    <property type="project" value="UniProtKB-UniRule"/>
</dbReference>
<dbReference type="GO" id="GO:0008270">
    <property type="term" value="F:zinc ion binding"/>
    <property type="evidence" value="ECO:0007669"/>
    <property type="project" value="UniProtKB-UniRule"/>
</dbReference>
<dbReference type="GO" id="GO:0051085">
    <property type="term" value="P:chaperone cofactor-dependent protein refolding"/>
    <property type="evidence" value="ECO:0007669"/>
    <property type="project" value="TreeGrafter"/>
</dbReference>
<dbReference type="GO" id="GO:0006260">
    <property type="term" value="P:DNA replication"/>
    <property type="evidence" value="ECO:0007669"/>
    <property type="project" value="UniProtKB-KW"/>
</dbReference>
<dbReference type="GO" id="GO:0042026">
    <property type="term" value="P:protein refolding"/>
    <property type="evidence" value="ECO:0007669"/>
    <property type="project" value="TreeGrafter"/>
</dbReference>
<dbReference type="GO" id="GO:0009408">
    <property type="term" value="P:response to heat"/>
    <property type="evidence" value="ECO:0007669"/>
    <property type="project" value="InterPro"/>
</dbReference>
<dbReference type="CDD" id="cd06257">
    <property type="entry name" value="DnaJ"/>
    <property type="match status" value="1"/>
</dbReference>
<dbReference type="CDD" id="cd10747">
    <property type="entry name" value="DnaJ_C"/>
    <property type="match status" value="1"/>
</dbReference>
<dbReference type="CDD" id="cd10719">
    <property type="entry name" value="DnaJ_zf"/>
    <property type="match status" value="1"/>
</dbReference>
<dbReference type="FunFam" id="2.60.260.20:FF:000005">
    <property type="entry name" value="Chaperone protein dnaJ 1, mitochondrial"/>
    <property type="match status" value="1"/>
</dbReference>
<dbReference type="FunFam" id="1.10.287.110:FF:000031">
    <property type="entry name" value="Molecular chaperone DnaJ"/>
    <property type="match status" value="1"/>
</dbReference>
<dbReference type="FunFam" id="2.10.230.10:FF:000002">
    <property type="entry name" value="Molecular chaperone DnaJ"/>
    <property type="match status" value="1"/>
</dbReference>
<dbReference type="Gene3D" id="1.10.287.110">
    <property type="entry name" value="DnaJ domain"/>
    <property type="match status" value="1"/>
</dbReference>
<dbReference type="Gene3D" id="2.10.230.10">
    <property type="entry name" value="Heat shock protein DnaJ, cysteine-rich domain"/>
    <property type="match status" value="1"/>
</dbReference>
<dbReference type="Gene3D" id="2.60.260.20">
    <property type="entry name" value="Urease metallochaperone UreE, N-terminal domain"/>
    <property type="match status" value="2"/>
</dbReference>
<dbReference type="HAMAP" id="MF_01152">
    <property type="entry name" value="DnaJ"/>
    <property type="match status" value="1"/>
</dbReference>
<dbReference type="InterPro" id="IPR012724">
    <property type="entry name" value="DnaJ"/>
</dbReference>
<dbReference type="InterPro" id="IPR002939">
    <property type="entry name" value="DnaJ_C"/>
</dbReference>
<dbReference type="InterPro" id="IPR001623">
    <property type="entry name" value="DnaJ_domain"/>
</dbReference>
<dbReference type="InterPro" id="IPR018253">
    <property type="entry name" value="DnaJ_domain_CS"/>
</dbReference>
<dbReference type="InterPro" id="IPR008971">
    <property type="entry name" value="HSP40/DnaJ_pept-bd"/>
</dbReference>
<dbReference type="InterPro" id="IPR001305">
    <property type="entry name" value="HSP_DnaJ_Cys-rich_dom"/>
</dbReference>
<dbReference type="InterPro" id="IPR036410">
    <property type="entry name" value="HSP_DnaJ_Cys-rich_dom_sf"/>
</dbReference>
<dbReference type="InterPro" id="IPR036869">
    <property type="entry name" value="J_dom_sf"/>
</dbReference>
<dbReference type="NCBIfam" id="TIGR02349">
    <property type="entry name" value="DnaJ_bact"/>
    <property type="match status" value="1"/>
</dbReference>
<dbReference type="NCBIfam" id="NF008035">
    <property type="entry name" value="PRK10767.1"/>
    <property type="match status" value="1"/>
</dbReference>
<dbReference type="NCBIfam" id="NF010891">
    <property type="entry name" value="PRK14298.1"/>
    <property type="match status" value="1"/>
</dbReference>
<dbReference type="PANTHER" id="PTHR43096">
    <property type="entry name" value="DNAJ HOMOLOG 1, MITOCHONDRIAL-RELATED"/>
    <property type="match status" value="1"/>
</dbReference>
<dbReference type="PANTHER" id="PTHR43096:SF52">
    <property type="entry name" value="DNAJ HOMOLOG 1, MITOCHONDRIAL-RELATED"/>
    <property type="match status" value="1"/>
</dbReference>
<dbReference type="Pfam" id="PF00226">
    <property type="entry name" value="DnaJ"/>
    <property type="match status" value="1"/>
</dbReference>
<dbReference type="Pfam" id="PF01556">
    <property type="entry name" value="DnaJ_C"/>
    <property type="match status" value="1"/>
</dbReference>
<dbReference type="Pfam" id="PF00684">
    <property type="entry name" value="DnaJ_CXXCXGXG"/>
    <property type="match status" value="1"/>
</dbReference>
<dbReference type="PRINTS" id="PR00625">
    <property type="entry name" value="JDOMAIN"/>
</dbReference>
<dbReference type="SMART" id="SM00271">
    <property type="entry name" value="DnaJ"/>
    <property type="match status" value="1"/>
</dbReference>
<dbReference type="SUPFAM" id="SSF46565">
    <property type="entry name" value="Chaperone J-domain"/>
    <property type="match status" value="1"/>
</dbReference>
<dbReference type="SUPFAM" id="SSF57938">
    <property type="entry name" value="DnaJ/Hsp40 cysteine-rich domain"/>
    <property type="match status" value="1"/>
</dbReference>
<dbReference type="SUPFAM" id="SSF49493">
    <property type="entry name" value="HSP40/DnaJ peptide-binding domain"/>
    <property type="match status" value="2"/>
</dbReference>
<dbReference type="PROSITE" id="PS00636">
    <property type="entry name" value="DNAJ_1"/>
    <property type="match status" value="1"/>
</dbReference>
<dbReference type="PROSITE" id="PS50076">
    <property type="entry name" value="DNAJ_2"/>
    <property type="match status" value="1"/>
</dbReference>
<dbReference type="PROSITE" id="PS51188">
    <property type="entry name" value="ZF_CR"/>
    <property type="match status" value="1"/>
</dbReference>
<protein>
    <recommendedName>
        <fullName evidence="1">Chaperone protein DnaJ</fullName>
    </recommendedName>
</protein>
<comment type="function">
    <text evidence="1">Participates actively in the response to hyperosmotic and heat shock by preventing the aggregation of stress-denatured proteins and by disaggregating proteins, also in an autonomous, DnaK-independent fashion. Unfolded proteins bind initially to DnaJ; upon interaction with the DnaJ-bound protein, DnaK hydrolyzes its bound ATP, resulting in the formation of a stable complex. GrpE releases ADP from DnaK; ATP binding to DnaK triggers the release of the substrate protein, thus completing the reaction cycle. Several rounds of ATP-dependent interactions between DnaJ, DnaK and GrpE are required for fully efficient folding. Also involved, together with DnaK and GrpE, in the DNA replication of plasmids through activation of initiation proteins.</text>
</comment>
<comment type="cofactor">
    <cofactor evidence="1">
        <name>Zn(2+)</name>
        <dbReference type="ChEBI" id="CHEBI:29105"/>
    </cofactor>
    <text evidence="1">Binds 2 Zn(2+) ions per monomer.</text>
</comment>
<comment type="subunit">
    <text evidence="1">Homodimer.</text>
</comment>
<comment type="subcellular location">
    <subcellularLocation>
        <location evidence="1">Cytoplasm</location>
    </subcellularLocation>
</comment>
<comment type="domain">
    <text evidence="1">The J domain is necessary and sufficient to stimulate DnaK ATPase activity. Zinc center 1 plays an important role in the autonomous, DnaK-independent chaperone activity of DnaJ. Zinc center 2 is essential for interaction with DnaK and for DnaJ activity.</text>
</comment>
<comment type="similarity">
    <text evidence="1">Belongs to the DnaJ family.</text>
</comment>
<sequence>MATKRDYYEILGLSKDSSVEDIKKTYRKLALQYHPDRNKEPGAEEKFKEISEAYAVLSDAEKRAQYDRFGHAGIDNQYSAEDIFRGADFGGFGDIFEMFFGGGRRGGPMGPRRGSDLQYDLYVTFEEAAFGVRKDIDIPRTERCSTCSGTGAKPGTSPKRCPNCGGTGQVRTTRSTLGMQFVSTTTCSACHGRGQVVESPCPTCSGAGRVRSRRKMSVNVPAGADSGMTLRLSGEGDAGEPGAPSGDLYIIVHVMEHKYFKRVDYDVISELPISFTQAALGADIMVDTLYGKVKMNIPSGTQTHSVFRLKDKGIQRLQGHGKGDQLVRVIIRTPTKLTQEQKDLLHQFEYLSNGKKPEAEERSRSDKQKSEKPRKSKGLFEKVKDAFES</sequence>
<gene>
    <name evidence="1" type="primary">dnaJ</name>
</gene>
<feature type="chain" id="PRO_0000070949" description="Chaperone protein DnaJ">
    <location>
        <begin position="1"/>
        <end position="389"/>
    </location>
</feature>
<feature type="domain" description="J" evidence="1">
    <location>
        <begin position="6"/>
        <end position="70"/>
    </location>
</feature>
<feature type="repeat" description="CXXCXGXG motif">
    <location>
        <begin position="144"/>
        <end position="151"/>
    </location>
</feature>
<feature type="repeat" description="CXXCXGXG motif">
    <location>
        <begin position="161"/>
        <end position="168"/>
    </location>
</feature>
<feature type="repeat" description="CXXCXGXG motif">
    <location>
        <begin position="187"/>
        <end position="194"/>
    </location>
</feature>
<feature type="repeat" description="CXXCXGXG motif">
    <location>
        <begin position="201"/>
        <end position="208"/>
    </location>
</feature>
<feature type="zinc finger region" description="CR-type" evidence="1">
    <location>
        <begin position="131"/>
        <end position="213"/>
    </location>
</feature>
<feature type="region of interest" description="Disordered" evidence="2">
    <location>
        <begin position="145"/>
        <end position="167"/>
    </location>
</feature>
<feature type="region of interest" description="Disordered" evidence="2">
    <location>
        <begin position="351"/>
        <end position="389"/>
    </location>
</feature>
<feature type="compositionally biased region" description="Basic and acidic residues" evidence="2">
    <location>
        <begin position="355"/>
        <end position="389"/>
    </location>
</feature>
<feature type="binding site" evidence="1">
    <location>
        <position position="144"/>
    </location>
    <ligand>
        <name>Zn(2+)</name>
        <dbReference type="ChEBI" id="CHEBI:29105"/>
        <label>1</label>
    </ligand>
</feature>
<feature type="binding site" evidence="1">
    <location>
        <position position="147"/>
    </location>
    <ligand>
        <name>Zn(2+)</name>
        <dbReference type="ChEBI" id="CHEBI:29105"/>
        <label>1</label>
    </ligand>
</feature>
<feature type="binding site" evidence="1">
    <location>
        <position position="161"/>
    </location>
    <ligand>
        <name>Zn(2+)</name>
        <dbReference type="ChEBI" id="CHEBI:29105"/>
        <label>2</label>
    </ligand>
</feature>
<feature type="binding site" evidence="1">
    <location>
        <position position="164"/>
    </location>
    <ligand>
        <name>Zn(2+)</name>
        <dbReference type="ChEBI" id="CHEBI:29105"/>
        <label>2</label>
    </ligand>
</feature>
<feature type="binding site" evidence="1">
    <location>
        <position position="187"/>
    </location>
    <ligand>
        <name>Zn(2+)</name>
        <dbReference type="ChEBI" id="CHEBI:29105"/>
        <label>2</label>
    </ligand>
</feature>
<feature type="binding site" evidence="1">
    <location>
        <position position="190"/>
    </location>
    <ligand>
        <name>Zn(2+)</name>
        <dbReference type="ChEBI" id="CHEBI:29105"/>
        <label>2</label>
    </ligand>
</feature>
<feature type="binding site" evidence="1">
    <location>
        <position position="201"/>
    </location>
    <ligand>
        <name>Zn(2+)</name>
        <dbReference type="ChEBI" id="CHEBI:29105"/>
        <label>1</label>
    </ligand>
</feature>
<feature type="binding site" evidence="1">
    <location>
        <position position="204"/>
    </location>
    <ligand>
        <name>Zn(2+)</name>
        <dbReference type="ChEBI" id="CHEBI:29105"/>
        <label>1</label>
    </ligand>
</feature>
<evidence type="ECO:0000255" key="1">
    <source>
        <dbReference type="HAMAP-Rule" id="MF_01152"/>
    </source>
</evidence>
<evidence type="ECO:0000256" key="2">
    <source>
        <dbReference type="SAM" id="MobiDB-lite"/>
    </source>
</evidence>
<reference key="1">
    <citation type="journal article" date="1993" name="Nucleic Acids Res.">
        <title>dnaJ in Archaea.</title>
        <authorList>
            <person name="Macario A.J.L."/>
            <person name="Dugan C.B."/>
            <person name="Clarens M."/>
            <person name="Conway de Macario E."/>
        </authorList>
    </citation>
    <scope>NUCLEOTIDE SEQUENCE [GENOMIC DNA]</scope>
    <source>
        <strain>S-6</strain>
    </source>
</reference>